<dbReference type="EMBL" id="AL590443">
    <property type="protein sequence ID" value="CAD26155.2"/>
    <property type="molecule type" value="Genomic_DNA"/>
</dbReference>
<dbReference type="RefSeq" id="NP_586299.1">
    <property type="nucleotide sequence ID" value="NM_001042132.1"/>
</dbReference>
<dbReference type="RefSeq" id="NP_597520.2">
    <property type="nucleotide sequence ID" value="NM_001040884.2"/>
</dbReference>
<dbReference type="GeneID" id="858682"/>
<dbReference type="KEGG" id="ecu:ECU03_0080"/>
<dbReference type="KEGG" id="ecu:ECU10_1820"/>
<dbReference type="VEuPathDB" id="MicrosporidiaDB:ECU03_0080"/>
<dbReference type="VEuPathDB" id="MicrosporidiaDB:ECU10_1820"/>
<dbReference type="HOGENOM" id="CLU_2277458_0_0_1"/>
<dbReference type="InParanoid" id="Q8SW79"/>
<dbReference type="Proteomes" id="UP000000819">
    <property type="component" value="Chromosome III"/>
</dbReference>
<proteinExistence type="inferred from homology"/>
<comment type="similarity">
    <text evidence="1">Belongs to the UPF0328 family.</text>
</comment>
<sequence>MANLVSVRRRPYRYPHSAIISSIFLIIIFTPDNLNNGATAFCSQLSPPYLDLQPIFSVLSASRQHHIPAFLLALACPIMGLIPMIKDSSTIPISRLPLLPSF</sequence>
<feature type="chain" id="PRO_0000223118" description="UPF0328 protein ECU03_0080">
    <location>
        <begin position="1"/>
        <end position="102"/>
    </location>
</feature>
<name>Y308_ENCCU</name>
<reference key="1">
    <citation type="journal article" date="2001" name="Nature">
        <title>Genome sequence and gene compaction of the eukaryote parasite Encephalitozoon cuniculi.</title>
        <authorList>
            <person name="Katinka M.D."/>
            <person name="Duprat S."/>
            <person name="Cornillot E."/>
            <person name="Metenier G."/>
            <person name="Thomarat F."/>
            <person name="Prensier G."/>
            <person name="Barbe V."/>
            <person name="Peyretaillade E."/>
            <person name="Brottier P."/>
            <person name="Wincker P."/>
            <person name="Delbac F."/>
            <person name="El Alaoui H."/>
            <person name="Peyret P."/>
            <person name="Saurin W."/>
            <person name="Gouy M."/>
            <person name="Weissenbach J."/>
            <person name="Vivares C.P."/>
        </authorList>
    </citation>
    <scope>NUCLEOTIDE SEQUENCE [LARGE SCALE GENOMIC DNA]</scope>
    <source>
        <strain>GB-M1</strain>
    </source>
</reference>
<reference key="2">
    <citation type="journal article" date="2009" name="BMC Genomics">
        <title>Identification of transcriptional signals in Encephalitozoon cuniculi widespread among Microsporidia phylum: support for accurate structural genome annotation.</title>
        <authorList>
            <person name="Peyretaillade E."/>
            <person name="Goncalves O."/>
            <person name="Terrat S."/>
            <person name="Dugat-Bony E."/>
            <person name="Wincker P."/>
            <person name="Cornman R.S."/>
            <person name="Evans J.D."/>
            <person name="Delbac F."/>
            <person name="Peyret P."/>
        </authorList>
    </citation>
    <scope>GENOME REANNOTATION</scope>
    <source>
        <strain>GB-M1</strain>
    </source>
</reference>
<protein>
    <recommendedName>
        <fullName>UPF0328 protein ECU03_0080</fullName>
    </recommendedName>
</protein>
<accession>Q8SW79</accession>
<keyword id="KW-1185">Reference proteome</keyword>
<gene>
    <name type="ordered locus">ECU03_0080</name>
</gene>
<organism>
    <name type="scientific">Encephalitozoon cuniculi (strain GB-M1)</name>
    <name type="common">Microsporidian parasite</name>
    <dbReference type="NCBI Taxonomy" id="284813"/>
    <lineage>
        <taxon>Eukaryota</taxon>
        <taxon>Fungi</taxon>
        <taxon>Fungi incertae sedis</taxon>
        <taxon>Microsporidia</taxon>
        <taxon>Unikaryonidae</taxon>
        <taxon>Encephalitozoon</taxon>
    </lineage>
</organism>
<evidence type="ECO:0000305" key="1"/>